<accession>A6TBC4</accession>
<reference key="1">
    <citation type="submission" date="2006-09" db="EMBL/GenBank/DDBJ databases">
        <authorList>
            <consortium name="The Klebsiella pneumonia Genome Sequencing Project"/>
            <person name="McClelland M."/>
            <person name="Sanderson E.K."/>
            <person name="Spieth J."/>
            <person name="Clifton W.S."/>
            <person name="Latreille P."/>
            <person name="Sabo A."/>
            <person name="Pepin K."/>
            <person name="Bhonagiri V."/>
            <person name="Porwollik S."/>
            <person name="Ali J."/>
            <person name="Wilson R.K."/>
        </authorList>
    </citation>
    <scope>NUCLEOTIDE SEQUENCE [LARGE SCALE GENOMIC DNA]</scope>
    <source>
        <strain>ATCC 700721 / MGH 78578</strain>
    </source>
</reference>
<protein>
    <recommendedName>
        <fullName evidence="1">Histidinol-phosphate aminotransferase</fullName>
        <ecNumber evidence="1">2.6.1.9</ecNumber>
    </recommendedName>
    <alternativeName>
        <fullName evidence="1">Imidazole acetol-phosphate transaminase</fullName>
    </alternativeName>
</protein>
<organism>
    <name type="scientific">Klebsiella pneumoniae subsp. pneumoniae (strain ATCC 700721 / MGH 78578)</name>
    <dbReference type="NCBI Taxonomy" id="272620"/>
    <lineage>
        <taxon>Bacteria</taxon>
        <taxon>Pseudomonadati</taxon>
        <taxon>Pseudomonadota</taxon>
        <taxon>Gammaproteobacteria</taxon>
        <taxon>Enterobacterales</taxon>
        <taxon>Enterobacteriaceae</taxon>
        <taxon>Klebsiella/Raoultella group</taxon>
        <taxon>Klebsiella</taxon>
        <taxon>Klebsiella pneumoniae complex</taxon>
    </lineage>
</organism>
<name>HIS8_KLEP7</name>
<sequence>MSIEDLARANVRALTPYQSARRLGGKGDVWLNANEFPTAVAFQLTEQTLNRYPEPQPKAVIESYARYAEVKPEQVLVSRGADEGIELLIRAFCEPGEDAVLYCPPTYGMYSVSAETIGVECRTVPTLADWQLDLPGIEARLDGVKVVFVCSPNNPTGQIIDPQSMRDLLEMTRGKAIVVADEAYIEFCPQATLAGWLSDYPHLVVLRTLSKAFALAGLRCGFTLANAEVINVLLKVIAPYPLSTPVADIAAQALSPEGIAAMRQRVAQILDERRYLVEQLRGIACVEQVFDSETNYVLARITASSAVFKSLWDQGIILRDQNKQPSLSGCLRITIGTRAESQRVIDALTAENV</sequence>
<proteinExistence type="evidence at protein level"/>
<keyword id="KW-0002">3D-structure</keyword>
<keyword id="KW-0028">Amino-acid biosynthesis</keyword>
<keyword id="KW-0032">Aminotransferase</keyword>
<keyword id="KW-0368">Histidine biosynthesis</keyword>
<keyword id="KW-0663">Pyridoxal phosphate</keyword>
<keyword id="KW-0808">Transferase</keyword>
<feature type="chain" id="PRO_0000319765" description="Histidinol-phosphate aminotransferase">
    <location>
        <begin position="1"/>
        <end position="353"/>
    </location>
</feature>
<feature type="modified residue" description="N6-(pyridoxal phosphate)lysine" evidence="1">
    <location>
        <position position="211"/>
    </location>
</feature>
<feature type="helix" evidence="2">
    <location>
        <begin position="3"/>
        <end position="6"/>
    </location>
</feature>
<feature type="helix" evidence="2">
    <location>
        <begin position="9"/>
        <end position="12"/>
    </location>
</feature>
<feature type="helix" evidence="2">
    <location>
        <begin position="58"/>
        <end position="68"/>
    </location>
</feature>
<feature type="helix" evidence="2">
    <location>
        <begin position="72"/>
        <end position="74"/>
    </location>
</feature>
<feature type="strand" evidence="2">
    <location>
        <begin position="75"/>
        <end position="79"/>
    </location>
</feature>
<feature type="helix" evidence="2">
    <location>
        <begin position="80"/>
        <end position="92"/>
    </location>
</feature>
<feature type="turn" evidence="2">
    <location>
        <begin position="95"/>
        <end position="97"/>
    </location>
</feature>
<feature type="strand" evidence="2">
    <location>
        <begin position="99"/>
        <end position="102"/>
    </location>
</feature>
<feature type="strand" evidence="2">
    <location>
        <begin position="104"/>
        <end position="106"/>
    </location>
</feature>
<feature type="helix" evidence="2">
    <location>
        <begin position="109"/>
        <end position="117"/>
    </location>
</feature>
<feature type="strand" evidence="2">
    <location>
        <begin position="120"/>
        <end position="123"/>
    </location>
</feature>
<feature type="helix" evidence="2">
    <location>
        <begin position="134"/>
        <end position="138"/>
    </location>
</feature>
<feature type="strand" evidence="2">
    <location>
        <begin position="144"/>
        <end position="152"/>
    </location>
</feature>
<feature type="turn" evidence="2">
    <location>
        <begin position="154"/>
        <end position="156"/>
    </location>
</feature>
<feature type="helix" evidence="2">
    <location>
        <begin position="162"/>
        <end position="172"/>
    </location>
</feature>
<feature type="turn" evidence="2">
    <location>
        <begin position="173"/>
        <end position="175"/>
    </location>
</feature>
<feature type="strand" evidence="2">
    <location>
        <begin position="177"/>
        <end position="181"/>
    </location>
</feature>
<feature type="helix" evidence="2">
    <location>
        <begin position="185"/>
        <end position="187"/>
    </location>
</feature>
<feature type="helix" evidence="2">
    <location>
        <begin position="189"/>
        <end position="191"/>
    </location>
</feature>
<feature type="helix" evidence="2">
    <location>
        <begin position="194"/>
        <end position="199"/>
    </location>
</feature>
<feature type="strand" evidence="2">
    <location>
        <begin position="203"/>
        <end position="211"/>
    </location>
</feature>
<feature type="helix" evidence="2">
    <location>
        <begin position="216"/>
        <end position="218"/>
    </location>
</feature>
<feature type="strand" evidence="2">
    <location>
        <begin position="221"/>
        <end position="225"/>
    </location>
</feature>
<feature type="helix" evidence="2">
    <location>
        <begin position="227"/>
        <end position="236"/>
    </location>
</feature>
<feature type="helix" evidence="2">
    <location>
        <begin position="244"/>
        <end position="253"/>
    </location>
</feature>
<feature type="helix" evidence="2">
    <location>
        <begin position="256"/>
        <end position="281"/>
    </location>
</feature>
<feature type="strand" evidence="2">
    <location>
        <begin position="286"/>
        <end position="289"/>
    </location>
</feature>
<feature type="strand" evidence="2">
    <location>
        <begin position="293"/>
        <end position="301"/>
    </location>
</feature>
<feature type="helix" evidence="2">
    <location>
        <begin position="304"/>
        <end position="313"/>
    </location>
</feature>
<feature type="strand" evidence="2">
    <location>
        <begin position="330"/>
        <end position="334"/>
    </location>
</feature>
<feature type="helix" evidence="2">
    <location>
        <begin position="338"/>
        <end position="350"/>
    </location>
</feature>
<gene>
    <name evidence="1" type="primary">hisC</name>
    <name type="ordered locus">KPN78578_24340</name>
    <name type="ORF">KPN_02477</name>
</gene>
<dbReference type="EC" id="2.6.1.9" evidence="1"/>
<dbReference type="EMBL" id="CP000647">
    <property type="protein sequence ID" value="ABR77895.1"/>
    <property type="molecule type" value="Genomic_DNA"/>
</dbReference>
<dbReference type="RefSeq" id="WP_004149000.1">
    <property type="nucleotide sequence ID" value="NC_009648.1"/>
</dbReference>
<dbReference type="PDB" id="7SZP">
    <property type="method" value="X-ray"/>
    <property type="resolution" value="1.80 A"/>
    <property type="chains" value="A/B/C/D=1-353"/>
</dbReference>
<dbReference type="PDBsum" id="7SZP"/>
<dbReference type="SMR" id="A6TBC4"/>
<dbReference type="STRING" id="272620.KPN_02477"/>
<dbReference type="jPOST" id="A6TBC4"/>
<dbReference type="PaxDb" id="272620-KPN_02477"/>
<dbReference type="EnsemblBacteria" id="ABR77895">
    <property type="protein sequence ID" value="ABR77895"/>
    <property type="gene ID" value="KPN_02477"/>
</dbReference>
<dbReference type="KEGG" id="kpn:KPN_02477"/>
<dbReference type="HOGENOM" id="CLU_017584_3_1_6"/>
<dbReference type="UniPathway" id="UPA00031">
    <property type="reaction ID" value="UER00012"/>
</dbReference>
<dbReference type="Proteomes" id="UP000000265">
    <property type="component" value="Chromosome"/>
</dbReference>
<dbReference type="GO" id="GO:0004400">
    <property type="term" value="F:histidinol-phosphate transaminase activity"/>
    <property type="evidence" value="ECO:0007669"/>
    <property type="project" value="UniProtKB-UniRule"/>
</dbReference>
<dbReference type="GO" id="GO:0030170">
    <property type="term" value="F:pyridoxal phosphate binding"/>
    <property type="evidence" value="ECO:0007669"/>
    <property type="project" value="InterPro"/>
</dbReference>
<dbReference type="GO" id="GO:0000105">
    <property type="term" value="P:L-histidine biosynthetic process"/>
    <property type="evidence" value="ECO:0007669"/>
    <property type="project" value="UniProtKB-UniRule"/>
</dbReference>
<dbReference type="CDD" id="cd00609">
    <property type="entry name" value="AAT_like"/>
    <property type="match status" value="1"/>
</dbReference>
<dbReference type="FunFam" id="3.40.640.10:FF:000032">
    <property type="entry name" value="Histidinol-phosphate aminotransferase"/>
    <property type="match status" value="1"/>
</dbReference>
<dbReference type="Gene3D" id="3.90.1150.10">
    <property type="entry name" value="Aspartate Aminotransferase, domain 1"/>
    <property type="match status" value="1"/>
</dbReference>
<dbReference type="Gene3D" id="3.40.640.10">
    <property type="entry name" value="Type I PLP-dependent aspartate aminotransferase-like (Major domain)"/>
    <property type="match status" value="1"/>
</dbReference>
<dbReference type="HAMAP" id="MF_01023">
    <property type="entry name" value="HisC_aminotrans_2"/>
    <property type="match status" value="1"/>
</dbReference>
<dbReference type="InterPro" id="IPR001917">
    <property type="entry name" value="Aminotrans_II_pyridoxalP_BS"/>
</dbReference>
<dbReference type="InterPro" id="IPR004839">
    <property type="entry name" value="Aminotransferase_I/II_large"/>
</dbReference>
<dbReference type="InterPro" id="IPR005861">
    <property type="entry name" value="HisP_aminotrans"/>
</dbReference>
<dbReference type="InterPro" id="IPR015424">
    <property type="entry name" value="PyrdxlP-dep_Trfase"/>
</dbReference>
<dbReference type="InterPro" id="IPR015421">
    <property type="entry name" value="PyrdxlP-dep_Trfase_major"/>
</dbReference>
<dbReference type="InterPro" id="IPR015422">
    <property type="entry name" value="PyrdxlP-dep_Trfase_small"/>
</dbReference>
<dbReference type="NCBIfam" id="TIGR01141">
    <property type="entry name" value="hisC"/>
    <property type="match status" value="1"/>
</dbReference>
<dbReference type="PANTHER" id="PTHR42885:SF2">
    <property type="entry name" value="HISTIDINOL-PHOSPHATE AMINOTRANSFERASE"/>
    <property type="match status" value="1"/>
</dbReference>
<dbReference type="PANTHER" id="PTHR42885">
    <property type="entry name" value="HISTIDINOL-PHOSPHATE AMINOTRANSFERASE-RELATED"/>
    <property type="match status" value="1"/>
</dbReference>
<dbReference type="Pfam" id="PF00155">
    <property type="entry name" value="Aminotran_1_2"/>
    <property type="match status" value="1"/>
</dbReference>
<dbReference type="SUPFAM" id="SSF53383">
    <property type="entry name" value="PLP-dependent transferases"/>
    <property type="match status" value="1"/>
</dbReference>
<dbReference type="PROSITE" id="PS00599">
    <property type="entry name" value="AA_TRANSFER_CLASS_2"/>
    <property type="match status" value="1"/>
</dbReference>
<evidence type="ECO:0000255" key="1">
    <source>
        <dbReference type="HAMAP-Rule" id="MF_01023"/>
    </source>
</evidence>
<evidence type="ECO:0007829" key="2">
    <source>
        <dbReference type="PDB" id="7SZP"/>
    </source>
</evidence>
<comment type="catalytic activity">
    <reaction evidence="1">
        <text>L-histidinol phosphate + 2-oxoglutarate = 3-(imidazol-4-yl)-2-oxopropyl phosphate + L-glutamate</text>
        <dbReference type="Rhea" id="RHEA:23744"/>
        <dbReference type="ChEBI" id="CHEBI:16810"/>
        <dbReference type="ChEBI" id="CHEBI:29985"/>
        <dbReference type="ChEBI" id="CHEBI:57766"/>
        <dbReference type="ChEBI" id="CHEBI:57980"/>
        <dbReference type="EC" id="2.6.1.9"/>
    </reaction>
</comment>
<comment type="cofactor">
    <cofactor evidence="1">
        <name>pyridoxal 5'-phosphate</name>
        <dbReference type="ChEBI" id="CHEBI:597326"/>
    </cofactor>
</comment>
<comment type="pathway">
    <text evidence="1">Amino-acid biosynthesis; L-histidine biosynthesis; L-histidine from 5-phospho-alpha-D-ribose 1-diphosphate: step 7/9.</text>
</comment>
<comment type="subunit">
    <text evidence="1">Homodimer.</text>
</comment>
<comment type="similarity">
    <text evidence="1">Belongs to the class-II pyridoxal-phosphate-dependent aminotransferase family. Histidinol-phosphate aminotransferase subfamily.</text>
</comment>